<reference key="1">
    <citation type="submission" date="2009-03" db="EMBL/GenBank/DDBJ databases">
        <title>Complete genome sequence of Edwardsiella ictaluri 93-146.</title>
        <authorList>
            <person name="Williams M.L."/>
            <person name="Gillaspy A.F."/>
            <person name="Dyer D.W."/>
            <person name="Thune R.L."/>
            <person name="Waldbieser G.C."/>
            <person name="Schuster S.C."/>
            <person name="Gipson J."/>
            <person name="Zaitshik J."/>
            <person name="Landry C."/>
            <person name="Lawrence M.L."/>
        </authorList>
    </citation>
    <scope>NUCLEOTIDE SEQUENCE [LARGE SCALE GENOMIC DNA]</scope>
    <source>
        <strain>93-146</strain>
    </source>
</reference>
<proteinExistence type="inferred from homology"/>
<evidence type="ECO:0000255" key="1">
    <source>
        <dbReference type="HAMAP-Rule" id="MF_00435"/>
    </source>
</evidence>
<evidence type="ECO:0000255" key="2">
    <source>
        <dbReference type="PROSITE-ProRule" id="PRU01197"/>
    </source>
</evidence>
<evidence type="ECO:0000255" key="3">
    <source>
        <dbReference type="PROSITE-ProRule" id="PRU01198"/>
    </source>
</evidence>
<sequence>MSNYFNTLNLRQQLAQLGKCRFMARTEFADGVNALRGKKVVIVGCGAQGLNQGLNMRDSGLDVAYALRAEAIAERRDSYRRATEHGFCVGDYQALIPQADLVINLTPDKQHAAVVSAVQPLMKPGAALGYSHGFNIVEVGQQIRPDITVVMVAPKCPGTEVREEYKRGFGVPTLIAVHPENDPRGAGMAIAKAWASATGGDRAGVLESSFVAEVKSDLMGEQTILCGMLQTGSLLCYERLVAEGADPAWAGKLIQFGWETITEALKQGGITLMMDRLSNPAKLRAYTLAGQLKTLMAPLFAKHMDDILSGAFSQGMMADWAADDAHLLTWRAETGESAFEKAPPFEGKIDEQTYFDRGVLLVAMVKAGVELAFETMVASGIVAESAYYESLHELPLIANTIARRRLYEMNVVISDTAEYGNYLFANAAVPLLRQGFMETLQPGDLGQPLPAEAVDNAALREVNQAIRQHPIETVGERLRGYMTDMKRVAVAG</sequence>
<organism>
    <name type="scientific">Edwardsiella ictaluri (strain 93-146)</name>
    <dbReference type="NCBI Taxonomy" id="634503"/>
    <lineage>
        <taxon>Bacteria</taxon>
        <taxon>Pseudomonadati</taxon>
        <taxon>Pseudomonadota</taxon>
        <taxon>Gammaproteobacteria</taxon>
        <taxon>Enterobacterales</taxon>
        <taxon>Hafniaceae</taxon>
        <taxon>Edwardsiella</taxon>
    </lineage>
</organism>
<gene>
    <name evidence="1" type="primary">ilvC</name>
    <name type="ordered locus">NT01EI_0083</name>
</gene>
<dbReference type="EC" id="1.1.1.86" evidence="1"/>
<dbReference type="EMBL" id="CP001600">
    <property type="protein sequence ID" value="ACR67343.1"/>
    <property type="molecule type" value="Genomic_DNA"/>
</dbReference>
<dbReference type="RefSeq" id="WP_015869564.1">
    <property type="nucleotide sequence ID" value="NZ_CP169062.1"/>
</dbReference>
<dbReference type="SMR" id="C5BBA8"/>
<dbReference type="STRING" id="67780.B6E78_11575"/>
<dbReference type="GeneID" id="69537192"/>
<dbReference type="KEGG" id="eic:NT01EI_0083"/>
<dbReference type="PATRIC" id="fig|634503.3.peg.76"/>
<dbReference type="HOGENOM" id="CLU_551905_0_0_6"/>
<dbReference type="OrthoDB" id="9804088at2"/>
<dbReference type="UniPathway" id="UPA00047">
    <property type="reaction ID" value="UER00056"/>
</dbReference>
<dbReference type="UniPathway" id="UPA00049">
    <property type="reaction ID" value="UER00060"/>
</dbReference>
<dbReference type="Proteomes" id="UP000001485">
    <property type="component" value="Chromosome"/>
</dbReference>
<dbReference type="GO" id="GO:0005829">
    <property type="term" value="C:cytosol"/>
    <property type="evidence" value="ECO:0007669"/>
    <property type="project" value="TreeGrafter"/>
</dbReference>
<dbReference type="GO" id="GO:0004455">
    <property type="term" value="F:ketol-acid reductoisomerase activity"/>
    <property type="evidence" value="ECO:0007669"/>
    <property type="project" value="UniProtKB-UniRule"/>
</dbReference>
<dbReference type="GO" id="GO:0000287">
    <property type="term" value="F:magnesium ion binding"/>
    <property type="evidence" value="ECO:0007669"/>
    <property type="project" value="UniProtKB-UniRule"/>
</dbReference>
<dbReference type="GO" id="GO:0009097">
    <property type="term" value="P:isoleucine biosynthetic process"/>
    <property type="evidence" value="ECO:0007669"/>
    <property type="project" value="UniProtKB-UniRule"/>
</dbReference>
<dbReference type="GO" id="GO:0009099">
    <property type="term" value="P:L-valine biosynthetic process"/>
    <property type="evidence" value="ECO:0007669"/>
    <property type="project" value="UniProtKB-UniRule"/>
</dbReference>
<dbReference type="FunFam" id="1.10.1040.10:FF:000007">
    <property type="entry name" value="Ketol-acid reductoisomerase (NADP(+))"/>
    <property type="match status" value="1"/>
</dbReference>
<dbReference type="FunFam" id="3.40.50.720:FF:000043">
    <property type="entry name" value="Ketol-acid reductoisomerase (NADP(+))"/>
    <property type="match status" value="1"/>
</dbReference>
<dbReference type="Gene3D" id="1.10.1040.10">
    <property type="entry name" value="N-(1-d-carboxylethyl)-l-norvaline Dehydrogenase, domain 2"/>
    <property type="match status" value="1"/>
</dbReference>
<dbReference type="Gene3D" id="3.40.50.720">
    <property type="entry name" value="NAD(P)-binding Rossmann-like Domain"/>
    <property type="match status" value="1"/>
</dbReference>
<dbReference type="HAMAP" id="MF_00435">
    <property type="entry name" value="IlvC"/>
    <property type="match status" value="1"/>
</dbReference>
<dbReference type="InterPro" id="IPR008927">
    <property type="entry name" value="6-PGluconate_DH-like_C_sf"/>
</dbReference>
<dbReference type="InterPro" id="IPR013328">
    <property type="entry name" value="6PGD_dom2"/>
</dbReference>
<dbReference type="InterPro" id="IPR013023">
    <property type="entry name" value="KARI"/>
</dbReference>
<dbReference type="InterPro" id="IPR000506">
    <property type="entry name" value="KARI_C"/>
</dbReference>
<dbReference type="InterPro" id="IPR013116">
    <property type="entry name" value="KARI_N"/>
</dbReference>
<dbReference type="InterPro" id="IPR036291">
    <property type="entry name" value="NAD(P)-bd_dom_sf"/>
</dbReference>
<dbReference type="NCBIfam" id="TIGR00465">
    <property type="entry name" value="ilvC"/>
    <property type="match status" value="1"/>
</dbReference>
<dbReference type="NCBIfam" id="NF003557">
    <property type="entry name" value="PRK05225.1"/>
    <property type="match status" value="1"/>
</dbReference>
<dbReference type="PANTHER" id="PTHR21371">
    <property type="entry name" value="KETOL-ACID REDUCTOISOMERASE, MITOCHONDRIAL"/>
    <property type="match status" value="1"/>
</dbReference>
<dbReference type="PANTHER" id="PTHR21371:SF1">
    <property type="entry name" value="KETOL-ACID REDUCTOISOMERASE, MITOCHONDRIAL"/>
    <property type="match status" value="1"/>
</dbReference>
<dbReference type="Pfam" id="PF01450">
    <property type="entry name" value="KARI_C"/>
    <property type="match status" value="2"/>
</dbReference>
<dbReference type="Pfam" id="PF07991">
    <property type="entry name" value="KARI_N"/>
    <property type="match status" value="1"/>
</dbReference>
<dbReference type="SUPFAM" id="SSF48179">
    <property type="entry name" value="6-phosphogluconate dehydrogenase C-terminal domain-like"/>
    <property type="match status" value="2"/>
</dbReference>
<dbReference type="SUPFAM" id="SSF51735">
    <property type="entry name" value="NAD(P)-binding Rossmann-fold domains"/>
    <property type="match status" value="1"/>
</dbReference>
<dbReference type="PROSITE" id="PS51851">
    <property type="entry name" value="KARI_C"/>
    <property type="match status" value="2"/>
</dbReference>
<dbReference type="PROSITE" id="PS51850">
    <property type="entry name" value="KARI_N"/>
    <property type="match status" value="1"/>
</dbReference>
<name>ILVC_EDWI9</name>
<feature type="chain" id="PRO_1000206082" description="Ketol-acid reductoisomerase (NADP(+))">
    <location>
        <begin position="1"/>
        <end position="492"/>
    </location>
</feature>
<feature type="domain" description="KARI N-terminal Rossmann" evidence="2">
    <location>
        <begin position="15"/>
        <end position="208"/>
    </location>
</feature>
<feature type="domain" description="KARI C-terminal knotted 1" evidence="3">
    <location>
        <begin position="209"/>
        <end position="344"/>
    </location>
</feature>
<feature type="domain" description="KARI C-terminal knotted 2" evidence="3">
    <location>
        <begin position="345"/>
        <end position="485"/>
    </location>
</feature>
<feature type="active site" evidence="1">
    <location>
        <position position="132"/>
    </location>
</feature>
<feature type="binding site" evidence="1">
    <location>
        <begin position="45"/>
        <end position="48"/>
    </location>
    <ligand>
        <name>NADP(+)</name>
        <dbReference type="ChEBI" id="CHEBI:58349"/>
    </ligand>
</feature>
<feature type="binding site" evidence="1">
    <location>
        <position position="68"/>
    </location>
    <ligand>
        <name>NADP(+)</name>
        <dbReference type="ChEBI" id="CHEBI:58349"/>
    </ligand>
</feature>
<feature type="binding site" evidence="1">
    <location>
        <position position="76"/>
    </location>
    <ligand>
        <name>NADP(+)</name>
        <dbReference type="ChEBI" id="CHEBI:58349"/>
    </ligand>
</feature>
<feature type="binding site" evidence="1">
    <location>
        <position position="78"/>
    </location>
    <ligand>
        <name>NADP(+)</name>
        <dbReference type="ChEBI" id="CHEBI:58349"/>
    </ligand>
</feature>
<feature type="binding site" evidence="1">
    <location>
        <begin position="108"/>
        <end position="110"/>
    </location>
    <ligand>
        <name>NADP(+)</name>
        <dbReference type="ChEBI" id="CHEBI:58349"/>
    </ligand>
</feature>
<feature type="binding site" evidence="1">
    <location>
        <position position="158"/>
    </location>
    <ligand>
        <name>NADP(+)</name>
        <dbReference type="ChEBI" id="CHEBI:58349"/>
    </ligand>
</feature>
<feature type="binding site" evidence="1">
    <location>
        <position position="217"/>
    </location>
    <ligand>
        <name>Mg(2+)</name>
        <dbReference type="ChEBI" id="CHEBI:18420"/>
        <label>1</label>
    </ligand>
</feature>
<feature type="binding site" evidence="1">
    <location>
        <position position="217"/>
    </location>
    <ligand>
        <name>Mg(2+)</name>
        <dbReference type="ChEBI" id="CHEBI:18420"/>
        <label>2</label>
    </ligand>
</feature>
<feature type="binding site" evidence="1">
    <location>
        <position position="221"/>
    </location>
    <ligand>
        <name>Mg(2+)</name>
        <dbReference type="ChEBI" id="CHEBI:18420"/>
        <label>1</label>
    </ligand>
</feature>
<feature type="binding site" evidence="1">
    <location>
        <position position="389"/>
    </location>
    <ligand>
        <name>Mg(2+)</name>
        <dbReference type="ChEBI" id="CHEBI:18420"/>
        <label>2</label>
    </ligand>
</feature>
<feature type="binding site" evidence="1">
    <location>
        <position position="393"/>
    </location>
    <ligand>
        <name>Mg(2+)</name>
        <dbReference type="ChEBI" id="CHEBI:18420"/>
        <label>2</label>
    </ligand>
</feature>
<feature type="binding site" evidence="1">
    <location>
        <position position="414"/>
    </location>
    <ligand>
        <name>substrate</name>
    </ligand>
</feature>
<protein>
    <recommendedName>
        <fullName evidence="1">Ketol-acid reductoisomerase (NADP(+))</fullName>
        <shortName evidence="1">KARI</shortName>
        <ecNumber evidence="1">1.1.1.86</ecNumber>
    </recommendedName>
    <alternativeName>
        <fullName evidence="1">Acetohydroxy-acid isomeroreductase</fullName>
        <shortName evidence="1">AHIR</shortName>
    </alternativeName>
    <alternativeName>
        <fullName evidence="1">Alpha-keto-beta-hydroxylacyl reductoisomerase</fullName>
    </alternativeName>
    <alternativeName>
        <fullName evidence="1">Ketol-acid reductoisomerase type 2</fullName>
    </alternativeName>
    <alternativeName>
        <fullName evidence="1">Ketol-acid reductoisomerase type II</fullName>
    </alternativeName>
</protein>
<accession>C5BBA8</accession>
<comment type="function">
    <text evidence="1">Involved in the biosynthesis of branched-chain amino acids (BCAA). Catalyzes an alkyl-migration followed by a ketol-acid reduction of (S)-2-acetolactate (S2AL) to yield (R)-2,3-dihydroxy-isovalerate. In the isomerase reaction, S2AL is rearranged via a Mg-dependent methyl migration to produce 3-hydroxy-3-methyl-2-ketobutyrate (HMKB). In the reductase reaction, this 2-ketoacid undergoes a metal-dependent reduction by NADPH to yield (R)-2,3-dihydroxy-isovalerate.</text>
</comment>
<comment type="catalytic activity">
    <reaction evidence="1">
        <text>(2R)-2,3-dihydroxy-3-methylbutanoate + NADP(+) = (2S)-2-acetolactate + NADPH + H(+)</text>
        <dbReference type="Rhea" id="RHEA:22068"/>
        <dbReference type="ChEBI" id="CHEBI:15378"/>
        <dbReference type="ChEBI" id="CHEBI:49072"/>
        <dbReference type="ChEBI" id="CHEBI:57783"/>
        <dbReference type="ChEBI" id="CHEBI:58349"/>
        <dbReference type="ChEBI" id="CHEBI:58476"/>
        <dbReference type="EC" id="1.1.1.86"/>
    </reaction>
</comment>
<comment type="catalytic activity">
    <reaction evidence="1">
        <text>(2R,3R)-2,3-dihydroxy-3-methylpentanoate + NADP(+) = (S)-2-ethyl-2-hydroxy-3-oxobutanoate + NADPH + H(+)</text>
        <dbReference type="Rhea" id="RHEA:13493"/>
        <dbReference type="ChEBI" id="CHEBI:15378"/>
        <dbReference type="ChEBI" id="CHEBI:49256"/>
        <dbReference type="ChEBI" id="CHEBI:49258"/>
        <dbReference type="ChEBI" id="CHEBI:57783"/>
        <dbReference type="ChEBI" id="CHEBI:58349"/>
        <dbReference type="EC" id="1.1.1.86"/>
    </reaction>
</comment>
<comment type="cofactor">
    <cofactor evidence="1">
        <name>Mg(2+)</name>
        <dbReference type="ChEBI" id="CHEBI:18420"/>
    </cofactor>
    <text evidence="1">Binds 2 magnesium ions per subunit.</text>
</comment>
<comment type="pathway">
    <text evidence="1">Amino-acid biosynthesis; L-isoleucine biosynthesis; L-isoleucine from 2-oxobutanoate: step 2/4.</text>
</comment>
<comment type="pathway">
    <text evidence="1">Amino-acid biosynthesis; L-valine biosynthesis; L-valine from pyruvate: step 2/4.</text>
</comment>
<comment type="similarity">
    <text evidence="1">Belongs to the ketol-acid reductoisomerase family.</text>
</comment>
<keyword id="KW-0028">Amino-acid biosynthesis</keyword>
<keyword id="KW-0100">Branched-chain amino acid biosynthesis</keyword>
<keyword id="KW-0460">Magnesium</keyword>
<keyword id="KW-0479">Metal-binding</keyword>
<keyword id="KW-0521">NADP</keyword>
<keyword id="KW-0560">Oxidoreductase</keyword>
<keyword id="KW-0677">Repeat</keyword>